<proteinExistence type="inferred from homology"/>
<keyword id="KW-0131">Cell cycle</keyword>
<keyword id="KW-0132">Cell division</keyword>
<keyword id="KW-0133">Cell shape</keyword>
<keyword id="KW-0961">Cell wall biogenesis/degradation</keyword>
<keyword id="KW-0963">Cytoplasm</keyword>
<keyword id="KW-0573">Peptidoglycan synthesis</keyword>
<keyword id="KW-0670">Pyruvate</keyword>
<keyword id="KW-0808">Transferase</keyword>
<protein>
    <recommendedName>
        <fullName evidence="1">UDP-N-acetylglucosamine 1-carboxyvinyltransferase</fullName>
        <ecNumber evidence="1">2.5.1.7</ecNumber>
    </recommendedName>
    <alternativeName>
        <fullName evidence="1">Enoylpyruvate transferase</fullName>
    </alternativeName>
    <alternativeName>
        <fullName evidence="1">UDP-N-acetylglucosamine enolpyruvyl transferase</fullName>
        <shortName evidence="1">EPT</shortName>
    </alternativeName>
</protein>
<evidence type="ECO:0000255" key="1">
    <source>
        <dbReference type="HAMAP-Rule" id="MF_00111"/>
    </source>
</evidence>
<organism>
    <name type="scientific">Bartonella tribocorum (strain CIP 105476 / IBS 506)</name>
    <dbReference type="NCBI Taxonomy" id="382640"/>
    <lineage>
        <taxon>Bacteria</taxon>
        <taxon>Pseudomonadati</taxon>
        <taxon>Pseudomonadota</taxon>
        <taxon>Alphaproteobacteria</taxon>
        <taxon>Hyphomicrobiales</taxon>
        <taxon>Bartonellaceae</taxon>
        <taxon>Bartonella</taxon>
    </lineage>
</organism>
<gene>
    <name evidence="1" type="primary">murA</name>
    <name type="ordered locus">BT_2096</name>
</gene>
<comment type="function">
    <text evidence="1">Cell wall formation. Adds enolpyruvyl to UDP-N-acetylglucosamine.</text>
</comment>
<comment type="catalytic activity">
    <reaction evidence="1">
        <text>phosphoenolpyruvate + UDP-N-acetyl-alpha-D-glucosamine = UDP-N-acetyl-3-O-(1-carboxyvinyl)-alpha-D-glucosamine + phosphate</text>
        <dbReference type="Rhea" id="RHEA:18681"/>
        <dbReference type="ChEBI" id="CHEBI:43474"/>
        <dbReference type="ChEBI" id="CHEBI:57705"/>
        <dbReference type="ChEBI" id="CHEBI:58702"/>
        <dbReference type="ChEBI" id="CHEBI:68483"/>
        <dbReference type="EC" id="2.5.1.7"/>
    </reaction>
</comment>
<comment type="pathway">
    <text evidence="1">Cell wall biogenesis; peptidoglycan biosynthesis.</text>
</comment>
<comment type="subcellular location">
    <subcellularLocation>
        <location evidence="1">Cytoplasm</location>
    </subcellularLocation>
</comment>
<comment type="similarity">
    <text evidence="1">Belongs to the EPSP synthase family. MurA subfamily.</text>
</comment>
<reference key="1">
    <citation type="journal article" date="2007" name="Nat. Genet.">
        <title>Genomic analysis of Bartonella identifies type IV secretion systems as host adaptability factors.</title>
        <authorList>
            <person name="Saenz H.L."/>
            <person name="Engel P."/>
            <person name="Stoeckli M.C."/>
            <person name="Lanz C."/>
            <person name="Raddatz G."/>
            <person name="Vayssier-Taussat M."/>
            <person name="Birtles R."/>
            <person name="Schuster S.C."/>
            <person name="Dehio C."/>
        </authorList>
    </citation>
    <scope>NUCLEOTIDE SEQUENCE [LARGE SCALE GENOMIC DNA]</scope>
    <source>
        <strain>CIP 105476 / IBS 506</strain>
    </source>
</reference>
<name>MURA_BART1</name>
<dbReference type="EC" id="2.5.1.7" evidence="1"/>
<dbReference type="EMBL" id="AM260525">
    <property type="protein sequence ID" value="CAK02247.1"/>
    <property type="molecule type" value="Genomic_DNA"/>
</dbReference>
<dbReference type="RefSeq" id="WP_012232315.1">
    <property type="nucleotide sequence ID" value="NC_010161.1"/>
</dbReference>
<dbReference type="SMR" id="A9IXV7"/>
<dbReference type="KEGG" id="btr:BT_2096"/>
<dbReference type="eggNOG" id="COG0766">
    <property type="taxonomic scope" value="Bacteria"/>
</dbReference>
<dbReference type="HOGENOM" id="CLU_027387_0_0_5"/>
<dbReference type="UniPathway" id="UPA00219"/>
<dbReference type="Proteomes" id="UP000001592">
    <property type="component" value="Chromosome"/>
</dbReference>
<dbReference type="GO" id="GO:0005737">
    <property type="term" value="C:cytoplasm"/>
    <property type="evidence" value="ECO:0007669"/>
    <property type="project" value="UniProtKB-SubCell"/>
</dbReference>
<dbReference type="GO" id="GO:0008760">
    <property type="term" value="F:UDP-N-acetylglucosamine 1-carboxyvinyltransferase activity"/>
    <property type="evidence" value="ECO:0007669"/>
    <property type="project" value="UniProtKB-UniRule"/>
</dbReference>
<dbReference type="GO" id="GO:0051301">
    <property type="term" value="P:cell division"/>
    <property type="evidence" value="ECO:0007669"/>
    <property type="project" value="UniProtKB-KW"/>
</dbReference>
<dbReference type="GO" id="GO:0071555">
    <property type="term" value="P:cell wall organization"/>
    <property type="evidence" value="ECO:0007669"/>
    <property type="project" value="UniProtKB-KW"/>
</dbReference>
<dbReference type="GO" id="GO:0009252">
    <property type="term" value="P:peptidoglycan biosynthetic process"/>
    <property type="evidence" value="ECO:0007669"/>
    <property type="project" value="UniProtKB-UniRule"/>
</dbReference>
<dbReference type="GO" id="GO:0008360">
    <property type="term" value="P:regulation of cell shape"/>
    <property type="evidence" value="ECO:0007669"/>
    <property type="project" value="UniProtKB-KW"/>
</dbReference>
<dbReference type="GO" id="GO:0019277">
    <property type="term" value="P:UDP-N-acetylgalactosamine biosynthetic process"/>
    <property type="evidence" value="ECO:0007669"/>
    <property type="project" value="InterPro"/>
</dbReference>
<dbReference type="CDD" id="cd01555">
    <property type="entry name" value="UdpNAET"/>
    <property type="match status" value="1"/>
</dbReference>
<dbReference type="FunFam" id="3.65.10.10:FF:000001">
    <property type="entry name" value="UDP-N-acetylglucosamine 1-carboxyvinyltransferase"/>
    <property type="match status" value="1"/>
</dbReference>
<dbReference type="Gene3D" id="3.65.10.10">
    <property type="entry name" value="Enolpyruvate transferase domain"/>
    <property type="match status" value="2"/>
</dbReference>
<dbReference type="HAMAP" id="MF_00111">
    <property type="entry name" value="MurA"/>
    <property type="match status" value="1"/>
</dbReference>
<dbReference type="InterPro" id="IPR001986">
    <property type="entry name" value="Enolpyruvate_Tfrase_dom"/>
</dbReference>
<dbReference type="InterPro" id="IPR036968">
    <property type="entry name" value="Enolpyruvate_Tfrase_sf"/>
</dbReference>
<dbReference type="InterPro" id="IPR050068">
    <property type="entry name" value="MurA_subfamily"/>
</dbReference>
<dbReference type="InterPro" id="IPR013792">
    <property type="entry name" value="RNA3'P_cycl/enolpyr_Trfase_a/b"/>
</dbReference>
<dbReference type="InterPro" id="IPR005750">
    <property type="entry name" value="UDP_GlcNAc_COvinyl_MurA"/>
</dbReference>
<dbReference type="NCBIfam" id="TIGR01072">
    <property type="entry name" value="murA"/>
    <property type="match status" value="1"/>
</dbReference>
<dbReference type="NCBIfam" id="NF006873">
    <property type="entry name" value="PRK09369.1"/>
    <property type="match status" value="1"/>
</dbReference>
<dbReference type="PANTHER" id="PTHR43783">
    <property type="entry name" value="UDP-N-ACETYLGLUCOSAMINE 1-CARBOXYVINYLTRANSFERASE"/>
    <property type="match status" value="1"/>
</dbReference>
<dbReference type="PANTHER" id="PTHR43783:SF1">
    <property type="entry name" value="UDP-N-ACETYLGLUCOSAMINE 1-CARBOXYVINYLTRANSFERASE"/>
    <property type="match status" value="1"/>
</dbReference>
<dbReference type="Pfam" id="PF00275">
    <property type="entry name" value="EPSP_synthase"/>
    <property type="match status" value="1"/>
</dbReference>
<dbReference type="SUPFAM" id="SSF55205">
    <property type="entry name" value="EPT/RTPC-like"/>
    <property type="match status" value="1"/>
</dbReference>
<sequence length="431" mass="46550">MDSIQIVGGEKLKGTIPISGAKNAALPLMIAALLTEETLTLENIPHLADVELLIRILNNHGVGYAVDGQEFDDDGVNSRTIHFTAQKIATTRAPYELVKKMRASFWVIGPLLARCFEAYVSLPGGCAIGTRPVDFILEGLKAFGAHIAIENGYVHAKAPKGLKGAHYHFPKVTVGGTHVLLMAATMAKGTTVLENAACEPEVTNLIRTLNAMGAQITGEGTTTLTIEGVKKLQGTRIRVIADRIEAGTYAMAVAMAGGDVFLKNANPNHLTTVLKVLQKTGLEIQIEPHGIHVKRNPRNTTIMPVDIKTGPYPAFPTDLQAQFMALMTRAEGVAHITETIFENRFMHVQELNRLGAEIKLDGQTATVYGKEKLQGAPVMATDLRASVSLVIAALAAKGETIVNRVYHLDRGFERLEEKLARCGAKIQRLTA</sequence>
<feature type="chain" id="PRO_1000075963" description="UDP-N-acetylglucosamine 1-carboxyvinyltransferase">
    <location>
        <begin position="1"/>
        <end position="431"/>
    </location>
</feature>
<feature type="active site" description="Proton donor" evidence="1">
    <location>
        <position position="126"/>
    </location>
</feature>
<feature type="binding site" evidence="1">
    <location>
        <begin position="22"/>
        <end position="23"/>
    </location>
    <ligand>
        <name>phosphoenolpyruvate</name>
        <dbReference type="ChEBI" id="CHEBI:58702"/>
    </ligand>
</feature>
<feature type="binding site" evidence="1">
    <location>
        <position position="102"/>
    </location>
    <ligand>
        <name>UDP-N-acetyl-alpha-D-glucosamine</name>
        <dbReference type="ChEBI" id="CHEBI:57705"/>
    </ligand>
</feature>
<feature type="binding site" evidence="1">
    <location>
        <position position="318"/>
    </location>
    <ligand>
        <name>UDP-N-acetyl-alpha-D-glucosamine</name>
        <dbReference type="ChEBI" id="CHEBI:57705"/>
    </ligand>
</feature>
<feature type="binding site" evidence="1">
    <location>
        <position position="340"/>
    </location>
    <ligand>
        <name>UDP-N-acetyl-alpha-D-glucosamine</name>
        <dbReference type="ChEBI" id="CHEBI:57705"/>
    </ligand>
</feature>
<feature type="modified residue" description="2-(S-cysteinyl)pyruvic acid O-phosphothioketal" evidence="1">
    <location>
        <position position="126"/>
    </location>
</feature>
<accession>A9IXV7</accession>